<gene>
    <name type="primary">Greb1l</name>
    <name type="synonym">Kiaa4095</name>
</gene>
<dbReference type="EMBL" id="AC102441">
    <property type="status" value="NOT_ANNOTATED_CDS"/>
    <property type="molecule type" value="Genomic_DNA"/>
</dbReference>
<dbReference type="EMBL" id="AC124740">
    <property type="status" value="NOT_ANNOTATED_CDS"/>
    <property type="molecule type" value="Genomic_DNA"/>
</dbReference>
<dbReference type="EMBL" id="BC147570">
    <property type="protein sequence ID" value="AAI47571.1"/>
    <property type="molecule type" value="mRNA"/>
</dbReference>
<dbReference type="EMBL" id="AK220484">
    <property type="protein sequence ID" value="BAD90285.1"/>
    <property type="molecule type" value="mRNA"/>
</dbReference>
<dbReference type="CCDS" id="CCDS37736.1"/>
<dbReference type="RefSeq" id="NP_001077097.1">
    <property type="nucleotide sequence ID" value="NM_001083628.1"/>
</dbReference>
<dbReference type="RefSeq" id="XP_030106381.1">
    <property type="nucleotide sequence ID" value="XM_030250521.2"/>
</dbReference>
<dbReference type="BioGRID" id="237806">
    <property type="interactions" value="1"/>
</dbReference>
<dbReference type="FunCoup" id="B9EJV3">
    <property type="interactions" value="6"/>
</dbReference>
<dbReference type="STRING" id="10090.ENSMUSP00000049003"/>
<dbReference type="GlyGen" id="B9EJV3">
    <property type="glycosylation" value="2 sites"/>
</dbReference>
<dbReference type="iPTMnet" id="B9EJV3"/>
<dbReference type="PhosphoSitePlus" id="B9EJV3"/>
<dbReference type="PaxDb" id="10090-ENSMUSP00000049003"/>
<dbReference type="ProteomicsDB" id="271295"/>
<dbReference type="Antibodypedia" id="70466">
    <property type="antibodies" value="12 antibodies from 6 providers"/>
</dbReference>
<dbReference type="Ensembl" id="ENSMUST00000048977.16">
    <property type="protein sequence ID" value="ENSMUSP00000049003.9"/>
    <property type="gene ID" value="ENSMUSG00000042942.19"/>
</dbReference>
<dbReference type="GeneID" id="381157"/>
<dbReference type="KEGG" id="mmu:381157"/>
<dbReference type="UCSC" id="uc008eat.1">
    <property type="organism name" value="mouse"/>
</dbReference>
<dbReference type="AGR" id="MGI:3576497"/>
<dbReference type="CTD" id="80000"/>
<dbReference type="MGI" id="MGI:3576497">
    <property type="gene designation" value="Greb1l"/>
</dbReference>
<dbReference type="VEuPathDB" id="HostDB:ENSMUSG00000042942"/>
<dbReference type="eggNOG" id="ENOG502QQXD">
    <property type="taxonomic scope" value="Eukaryota"/>
</dbReference>
<dbReference type="GeneTree" id="ENSGT00390000008041"/>
<dbReference type="HOGENOM" id="CLU_237163_0_0_1"/>
<dbReference type="InParanoid" id="B9EJV3"/>
<dbReference type="OMA" id="CHQYMEF"/>
<dbReference type="PhylomeDB" id="B9EJV3"/>
<dbReference type="TreeFam" id="TF329531"/>
<dbReference type="BioGRID-ORCS" id="381157">
    <property type="hits" value="2 hits in 77 CRISPR screens"/>
</dbReference>
<dbReference type="ChiTaRS" id="Greb1l">
    <property type="organism name" value="mouse"/>
</dbReference>
<dbReference type="PRO" id="PR:B9EJV3"/>
<dbReference type="Proteomes" id="UP000000589">
    <property type="component" value="Chromosome 18"/>
</dbReference>
<dbReference type="RNAct" id="B9EJV3">
    <property type="molecule type" value="protein"/>
</dbReference>
<dbReference type="Bgee" id="ENSMUSG00000042942">
    <property type="expression patterns" value="Expressed in presomitic mesoderm and 171 other cell types or tissues"/>
</dbReference>
<dbReference type="ExpressionAtlas" id="B9EJV3">
    <property type="expression patterns" value="baseline and differential"/>
</dbReference>
<dbReference type="GO" id="GO:0016020">
    <property type="term" value="C:membrane"/>
    <property type="evidence" value="ECO:0007669"/>
    <property type="project" value="UniProtKB-SubCell"/>
</dbReference>
<dbReference type="GO" id="GO:0001658">
    <property type="term" value="P:branching involved in ureteric bud morphogenesis"/>
    <property type="evidence" value="ECO:0000315"/>
    <property type="project" value="MGI"/>
</dbReference>
<dbReference type="GO" id="GO:0055007">
    <property type="term" value="P:cardiac muscle cell differentiation"/>
    <property type="evidence" value="ECO:0000315"/>
    <property type="project" value="MGI"/>
</dbReference>
<dbReference type="GO" id="GO:0003231">
    <property type="term" value="P:cardiac ventricle development"/>
    <property type="evidence" value="ECO:0000315"/>
    <property type="project" value="MGI"/>
</dbReference>
<dbReference type="GO" id="GO:0035050">
    <property type="term" value="P:embryonic heart tube development"/>
    <property type="evidence" value="ECO:0000315"/>
    <property type="project" value="MGI"/>
</dbReference>
<dbReference type="GO" id="GO:0060562">
    <property type="term" value="P:epithelial tube morphogenesis"/>
    <property type="evidence" value="ECO:0000315"/>
    <property type="project" value="MGI"/>
</dbReference>
<dbReference type="GO" id="GO:0001822">
    <property type="term" value="P:kidney development"/>
    <property type="evidence" value="ECO:0000315"/>
    <property type="project" value="MGI"/>
</dbReference>
<dbReference type="GO" id="GO:0030539">
    <property type="term" value="P:male genitalia development"/>
    <property type="evidence" value="ECO:0000315"/>
    <property type="project" value="MGI"/>
</dbReference>
<dbReference type="GO" id="GO:0072177">
    <property type="term" value="P:mesonephric duct development"/>
    <property type="evidence" value="ECO:0000315"/>
    <property type="project" value="MGI"/>
</dbReference>
<dbReference type="GO" id="GO:0001656">
    <property type="term" value="P:metanephros development"/>
    <property type="evidence" value="ECO:0000315"/>
    <property type="project" value="MGI"/>
</dbReference>
<dbReference type="GO" id="GO:0003151">
    <property type="term" value="P:outflow tract morphogenesis"/>
    <property type="evidence" value="ECO:0000315"/>
    <property type="project" value="MGI"/>
</dbReference>
<dbReference type="GO" id="GO:0061205">
    <property type="term" value="P:paramesonephric duct development"/>
    <property type="evidence" value="ECO:0000315"/>
    <property type="project" value="MGI"/>
</dbReference>
<dbReference type="GO" id="GO:0048384">
    <property type="term" value="P:retinoic acid receptor signaling pathway"/>
    <property type="evidence" value="ECO:0000315"/>
    <property type="project" value="MGI"/>
</dbReference>
<dbReference type="GO" id="GO:0042254">
    <property type="term" value="P:ribosome biogenesis"/>
    <property type="evidence" value="ECO:0000315"/>
    <property type="project" value="MGI"/>
</dbReference>
<dbReference type="GO" id="GO:0060065">
    <property type="term" value="P:uterus development"/>
    <property type="evidence" value="ECO:0000315"/>
    <property type="project" value="MGI"/>
</dbReference>
<dbReference type="InterPro" id="IPR028422">
    <property type="entry name" value="GREB1"/>
</dbReference>
<dbReference type="InterPro" id="IPR048659">
    <property type="entry name" value="GREB1-like_2nd"/>
</dbReference>
<dbReference type="InterPro" id="IPR046927">
    <property type="entry name" value="GREB1-like_C"/>
</dbReference>
<dbReference type="InterPro" id="IPR048657">
    <property type="entry name" value="GREB1-like_cpSF2"/>
</dbReference>
<dbReference type="InterPro" id="IPR046926">
    <property type="entry name" value="GREB1_N"/>
</dbReference>
<dbReference type="InterPro" id="IPR049100">
    <property type="entry name" value="TAGT"/>
</dbReference>
<dbReference type="PANTHER" id="PTHR15720:SF12">
    <property type="entry name" value="GREB1-LIKE PROTEIN"/>
    <property type="match status" value="1"/>
</dbReference>
<dbReference type="PANTHER" id="PTHR15720">
    <property type="entry name" value="GREB1-RELATED"/>
    <property type="match status" value="1"/>
</dbReference>
<dbReference type="Pfam" id="PF20692">
    <property type="entry name" value="cpSF2-GREB1"/>
    <property type="match status" value="1"/>
</dbReference>
<dbReference type="Pfam" id="PF20688">
    <property type="entry name" value="GREB1_2nd"/>
    <property type="match status" value="1"/>
</dbReference>
<dbReference type="Pfam" id="PF20267">
    <property type="entry name" value="GREB1_C"/>
    <property type="match status" value="1"/>
</dbReference>
<dbReference type="Pfam" id="PF15782">
    <property type="entry name" value="GREB1_N"/>
    <property type="match status" value="1"/>
</dbReference>
<dbReference type="Pfam" id="PF20691">
    <property type="entry name" value="TAGT"/>
    <property type="match status" value="1"/>
</dbReference>
<proteinExistence type="evidence at transcript level"/>
<protein>
    <recommendedName>
        <fullName>GREB1-like protein</fullName>
    </recommendedName>
</protein>
<feature type="chain" id="PRO_0000416127" description="GREB1-like protein">
    <location>
        <begin position="1"/>
        <end position="1913"/>
    </location>
</feature>
<feature type="transmembrane region" description="Helical" evidence="1">
    <location>
        <begin position="1832"/>
        <end position="1852"/>
    </location>
</feature>
<feature type="region of interest" description="Disordered" evidence="2">
    <location>
        <begin position="86"/>
        <end position="111"/>
    </location>
</feature>
<feature type="region of interest" description="Disordered" evidence="2">
    <location>
        <begin position="281"/>
        <end position="309"/>
    </location>
</feature>
<feature type="region of interest" description="Disordered" evidence="2">
    <location>
        <begin position="1097"/>
        <end position="1157"/>
    </location>
</feature>
<feature type="region of interest" description="Disordered" evidence="2">
    <location>
        <begin position="1179"/>
        <end position="1207"/>
    </location>
</feature>
<feature type="compositionally biased region" description="Acidic residues" evidence="2">
    <location>
        <begin position="86"/>
        <end position="96"/>
    </location>
</feature>
<feature type="compositionally biased region" description="Low complexity" evidence="2">
    <location>
        <begin position="289"/>
        <end position="301"/>
    </location>
</feature>
<feature type="compositionally biased region" description="Polar residues" evidence="2">
    <location>
        <begin position="1118"/>
        <end position="1157"/>
    </location>
</feature>
<feature type="compositionally biased region" description="Low complexity" evidence="2">
    <location>
        <begin position="1187"/>
        <end position="1200"/>
    </location>
</feature>
<evidence type="ECO:0000255" key="1"/>
<evidence type="ECO:0000256" key="2">
    <source>
        <dbReference type="SAM" id="MobiDB-lite"/>
    </source>
</evidence>
<evidence type="ECO:0000269" key="3">
    <source>
    </source>
</evidence>
<evidence type="ECO:0000269" key="4">
    <source>
    </source>
</evidence>
<evidence type="ECO:0000269" key="5">
    <source>
    </source>
</evidence>
<evidence type="ECO:0000305" key="6"/>
<comment type="function">
    <text evidence="4">Plays a major role in early metanephros and genital development.</text>
</comment>
<comment type="subcellular location">
    <subcellularLocation>
        <location evidence="1">Membrane</location>
        <topology evidence="1">Single-pass membrane protein</topology>
    </subcellularLocation>
</comment>
<comment type="tissue specificity">
    <text evidence="5">Expressed in the inner ear, with a high presence in the spiral ganglia, cochlear nerve bundles, and hair cells.</text>
</comment>
<comment type="developmental stage">
    <text evidence="3 4 5">At 15.5 dpc, expressed in kidney, ureter and bladder (PubMed:29100090). At 16.0 dpc, strong expression in the liver, thymus, intestine, kidney, and brain. In the brain, high levels in the ventricular zone and in the neopallial cortex. In the kidney, highest levels in the nephrogenic zone located in the cortical region of the kidney. Also observed in epithelial cells of the differentiating renal tubules. At P0, strong expression in the nephrogenic zone (PubMed:29100091). In the inner ear, prominent expression is observed between 13 and 16 dpc (PubMed:29955957).</text>
</comment>
<comment type="disruption phenotype">
    <text evidence="4">Embryonic lethal at the homozygous state. At 13.5 dpc, all homozygous embryos are significantly smaller compared to wild-type and heterozygous littermates and present with exencephaly. Male and female embryos lack kidney and show absence of Wolffian and Muellerian ducts, respectively. However, mesonephric tubules are consistently observed. Some potential remnants of ureteric bud are present in most mutant embryos. In male mutant embryos, the gonads are severely affected, being small and with poorly organized sex-cords compared to wild-type littermates. Mutant embryos also show cardiac morphogenesis defects with superimposed ventricles.</text>
</comment>
<comment type="similarity">
    <text evidence="6">Belongs to the GREB1 family.</text>
</comment>
<keyword id="KW-0217">Developmental protein</keyword>
<keyword id="KW-0472">Membrane</keyword>
<keyword id="KW-1185">Reference proteome</keyword>
<keyword id="KW-0812">Transmembrane</keyword>
<keyword id="KW-1133">Transmembrane helix</keyword>
<sequence length="1913" mass="213628">MGNSYAGQLKSARFEEALHNSIEASLRCSTAVPRPIFSQLYLDPDQHPFSTADVKPKVEDLDKDLVHPYTQNGSVDFSHNVAMNEMEDDEDEEEMSDSNSPPIPYSQKPAPEGSCTTDGFCQAGKDLRLVSLCMEQIDIPAGFLLVGAKSPNLPEHILVCAVDKRFLPDDHGKNALLGFSGNCIGCGERGFRYFTEFSNHINLKLTTQPKKQKHLKYYLVRTSQGVLSKGPLICWKECRSRQSSALCHSTKPISSVSSAVAPENGTANGYKAGFTVTEAANGTSGHGGKSSSCSSTPSRPGNYSLSPRPTFTSVDQANMFISGPPKKRHRGWYPGSPVSQSALVVPAPTVRPLSRTEPLLSTPVPQTPLTGILQPRPVLAGETVIVPENLLSNSGVRPVILIGYGTLPYFYGNVGDIVVSPLLVNCYKIPQLENKDLEQLGLTSTHLLSVENMILLTIQYLVRLGPDQIPLREEFEQIMLTAMQEFSVRERALPLGAPCAPMSPAQLPWLARLAASVSQDLVHVIVTQNSLAEGISETLRLLSEMKHYQRLPDYVVAICASKIRGNEFCVVVLGQHQSRALAESMLTTSEFLKEISYELITGKVSFLASHFKTTSLGDDLDKLLEKMQQRRGDSVVTPFNGDLDECVSPQEAAAMIPTQNLDVDNETFQIYQPQLTVARRLLSQVCAIADSGSQSLDLGHFSKVDFIIIVPRSEVLVQQTLQRVRQSGVLVDLGLEESGLAHQRAERYVVRLDNEIQSKFEVFMRRVKQNPYTLFVLVHDNSHVELTSVISGSLSHGEPTHGLADRVINCREVLEAFNLLVLQVSSFPYTLQTQQSRISSSNEVHWIQLDTMEDAGCEKLYFGLDEYSKSLQWGITSPLLRCDETFEKMVSTLLERYPRLHSMVVRCYLLIQQYSEALMALTTMASLRDHSTPETLSIMDDLITSPGKNKSGKGHMLVIRVPSVQLAMLAKERLQEVRDKLGLQYRFEIILGSPASELTVETHFVTRLKTWRGNDQDEWIPRTYQDLEGLPCIVILTGKDPLGETFPRSLKYCDLRLIDSSYLTRTALEQEVGLACCYVSKEVIRGPAAALDLSAKEAERVPASENDSEELLIDLERPQSNSSAVTGTSGSIMENGVSSSSTAGKPQQQLLTPTSSIRLDEGVSASTAVVGEILKQECDSLDPPMASSTTSKPSSSSSSSAQALAWSRQPRGLHTALPPVIILSKAAYSLLGSQKGGRLPSSSSLLPHADVAWVSSLRPGLHKDMSSEEQSLYYRQWTSARQHHADYSNQPDPISGARTLHPRRLLLTGPPQVGKTGSYLQFLRILFRMLIRLLEVDVYNEEEINTDHSDDSELSQSEGEPWPDIETFSKMPFDVSVHDPKYRLMSLVYSEKLAGIKQEVIKEYKVEEPRQRETMSMMLTQYAAYNTFHHCEQCQQYMAFTPASQMSDSTLHAFTFSSSMLGEEVQLYFIIPKSKESHFVFSKQGRHLESMRLPLVSDKNLNAVKSPIFTPSSGRHEHGLLNLFHAMEGISHLHLLVVKEYEMPLYRKYWPNHIMLVLPGMFNNAGVGAARFLIKELSYHNLELERNRLEELGVKRQCVWPFIVVMDDSCVLWNIHSVQEQTSQPTEAGISSKNVSLKSVLQHIEATPKIIHYAILGIQKWNSKLTSQSLKAPFSRCHVHDFILLNIDLTQNVQYDFNRYFCEDVDFNLRTNSSGLLICRFNNFSLMKKHVQVGGQRDFIIKPKLMVSENVVPILPLQYVCAPDSEHTLLAAPAQFLLEKFLQHASYKLFPKAIHNFKSPVLAIDCYLNIGQEVAICYVSSRPHSSNVNCEGVFFSGLLLYLCDSFVGADLLKKFKFLKGATLCVICQDRSSLRQTIVRLELEDEWQFRLRDEFQTANSSDDKPLYFLTGRHV</sequence>
<accession>B9EJV3</accession>
<accession>Q5DTN6</accession>
<name>GRB1L_MOUSE</name>
<reference key="1">
    <citation type="journal article" date="2009" name="PLoS Biol.">
        <title>Lineage-specific biology revealed by a finished genome assembly of the mouse.</title>
        <authorList>
            <person name="Church D.M."/>
            <person name="Goodstadt L."/>
            <person name="Hillier L.W."/>
            <person name="Zody M.C."/>
            <person name="Goldstein S."/>
            <person name="She X."/>
            <person name="Bult C.J."/>
            <person name="Agarwala R."/>
            <person name="Cherry J.L."/>
            <person name="DiCuccio M."/>
            <person name="Hlavina W."/>
            <person name="Kapustin Y."/>
            <person name="Meric P."/>
            <person name="Maglott D."/>
            <person name="Birtle Z."/>
            <person name="Marques A.C."/>
            <person name="Graves T."/>
            <person name="Zhou S."/>
            <person name="Teague B."/>
            <person name="Potamousis K."/>
            <person name="Churas C."/>
            <person name="Place M."/>
            <person name="Herschleb J."/>
            <person name="Runnheim R."/>
            <person name="Forrest D."/>
            <person name="Amos-Landgraf J."/>
            <person name="Schwartz D.C."/>
            <person name="Cheng Z."/>
            <person name="Lindblad-Toh K."/>
            <person name="Eichler E.E."/>
            <person name="Ponting C.P."/>
        </authorList>
    </citation>
    <scope>NUCLEOTIDE SEQUENCE [LARGE SCALE GENOMIC DNA]</scope>
    <source>
        <strain>C57BL/6J</strain>
    </source>
</reference>
<reference key="2">
    <citation type="journal article" date="2004" name="Genome Res.">
        <title>The status, quality, and expansion of the NIH full-length cDNA project: the Mammalian Gene Collection (MGC).</title>
        <authorList>
            <consortium name="The MGC Project Team"/>
        </authorList>
    </citation>
    <scope>NUCLEOTIDE SEQUENCE [LARGE SCALE MRNA]</scope>
    <source>
        <tissue>Brain</tissue>
    </source>
</reference>
<reference key="3">
    <citation type="submission" date="2005-02" db="EMBL/GenBank/DDBJ databases">
        <title>Prediction of the coding sequences of mouse homologues of KIAA gene. The complete nucleotide sequences of mouse KIAA-homologous cDNAs identified by screening of terminal sequences of cDNA clones randomly sampled from size-fractionated libraries.</title>
        <authorList>
            <person name="Okazaki N."/>
            <person name="Kikuno R.F."/>
            <person name="Ohara R."/>
            <person name="Inamoto S."/>
            <person name="Nagase T."/>
            <person name="Ohara O."/>
            <person name="Koga H."/>
        </authorList>
    </citation>
    <scope>NUCLEOTIDE SEQUENCE [LARGE SCALE MRNA] OF 1089-1913</scope>
    <source>
        <tissue>Fetal brain</tissue>
    </source>
</reference>
<reference key="4">
    <citation type="journal article" date="2017" name="Am. J. Hum. Genet.">
        <title>Exome-wide association study identifies GREB1L mutations in congenital kidney malformations.</title>
        <authorList>
            <person name="Sanna-Cherchi S."/>
            <person name="Khan K."/>
            <person name="Westland R."/>
            <person name="Krithivasan P."/>
            <person name="Fievet L."/>
            <person name="Rasouly H.M."/>
            <person name="Ionita-Laza I."/>
            <person name="Capone V.P."/>
            <person name="Fasel D.A."/>
            <person name="Kiryluk K."/>
            <person name="Kamalakaran S."/>
            <person name="Bodria M."/>
            <person name="Otto E.A."/>
            <person name="Sampson M.G."/>
            <person name="Gillies C.E."/>
            <person name="Vega-Warner V."/>
            <person name="Vukojevic K."/>
            <person name="Pediaditakis I."/>
            <person name="Makar G.S."/>
            <person name="Mitrotti A."/>
            <person name="Verbitsky M."/>
            <person name="Martino J."/>
            <person name="Liu Q."/>
            <person name="Na Y.J."/>
            <person name="Goj V."/>
            <person name="Ardissino G."/>
            <person name="Gigante M."/>
            <person name="Gesualdo L."/>
            <person name="Janezcko M."/>
            <person name="Zaniew M."/>
            <person name="Mendelsohn C.L."/>
            <person name="Shril S."/>
            <person name="Hildebrandt F."/>
            <person name="van Wijk J.A.E."/>
            <person name="Arapovic A."/>
            <person name="Saraga M."/>
            <person name="Allegri L."/>
            <person name="Izzi C."/>
            <person name="Scolari F."/>
            <person name="Tasic V."/>
            <person name="Ghiggeri G.M."/>
            <person name="Latos-Bielenska A."/>
            <person name="Materna-Kiryluk A."/>
            <person name="Mane S."/>
            <person name="Goldstein D.B."/>
            <person name="Lifton R.P."/>
            <person name="Katsanis N."/>
            <person name="Davis E.E."/>
            <person name="Gharavi A.G."/>
        </authorList>
    </citation>
    <scope>DEVELOPMENTAL STAGE</scope>
</reference>
<reference key="5">
    <citation type="journal article" date="2017" name="Am. J. Hum. Genet.">
        <title>Mutations in GREB1L cause bilateral kidney agenesis in humans and mice.</title>
        <authorList>
            <person name="De Tomasi L."/>
            <person name="David P."/>
            <person name="Humbert C."/>
            <person name="Silbermann F."/>
            <person name="Arrondel C."/>
            <person name="Tores F."/>
            <person name="Fouquet S."/>
            <person name="Desgrange A."/>
            <person name="Niel O."/>
            <person name="Bole-Feysot C."/>
            <person name="Nitschke P."/>
            <person name="Roume J."/>
            <person name="Cordier M.P."/>
            <person name="Pietrement C."/>
            <person name="Isidor B."/>
            <person name="Khau Van Kien P."/>
            <person name="Gonzales M."/>
            <person name="Saint-Frison M.H."/>
            <person name="Martinovic J."/>
            <person name="Novo R."/>
            <person name="Piard J."/>
            <person name="Cabrol C."/>
            <person name="Verma I.C."/>
            <person name="Puri R."/>
            <person name="Journel H."/>
            <person name="Aziza J."/>
            <person name="Gavard L."/>
            <person name="Said-Menthon M.H."/>
            <person name="Heidet L."/>
            <person name="Saunier S."/>
            <person name="Jeanpierre C."/>
        </authorList>
    </citation>
    <scope>FUNCTION</scope>
    <scope>DEVELOPMENTAL STAGE</scope>
    <scope>DISRUPTION PHENOTYPE</scope>
</reference>
<reference key="6">
    <citation type="journal article" date="2018" name="Hum. Genet.">
        <title>De novo variants in GREB1L are associated with non-syndromic inner ear malformations and deafness.</title>
        <authorList>
            <person name="Schrauwen I."/>
            <person name="Kari E."/>
            <person name="Mattox J."/>
            <person name="Llaci L."/>
            <person name="Smeeton J."/>
            <person name="Naymik M."/>
            <person name="Raible D.W."/>
            <person name="Knowles J.A."/>
            <person name="Crump J.G."/>
            <person name="Huentelman M.J."/>
            <person name="Friedman R.A."/>
        </authorList>
    </citation>
    <scope>TISSUE SPECIFICITY</scope>
    <scope>DEVELOPMENTAL STAGE</scope>
</reference>
<organism>
    <name type="scientific">Mus musculus</name>
    <name type="common">Mouse</name>
    <dbReference type="NCBI Taxonomy" id="10090"/>
    <lineage>
        <taxon>Eukaryota</taxon>
        <taxon>Metazoa</taxon>
        <taxon>Chordata</taxon>
        <taxon>Craniata</taxon>
        <taxon>Vertebrata</taxon>
        <taxon>Euteleostomi</taxon>
        <taxon>Mammalia</taxon>
        <taxon>Eutheria</taxon>
        <taxon>Euarchontoglires</taxon>
        <taxon>Glires</taxon>
        <taxon>Rodentia</taxon>
        <taxon>Myomorpha</taxon>
        <taxon>Muroidea</taxon>
        <taxon>Muridae</taxon>
        <taxon>Murinae</taxon>
        <taxon>Mus</taxon>
        <taxon>Mus</taxon>
    </lineage>
</organism>